<keyword id="KW-0165">Cleavage on pair of basic residues</keyword>
<keyword id="KW-1015">Disulfide bond</keyword>
<keyword id="KW-0325">Glycoprotein</keyword>
<keyword id="KW-0339">Growth factor</keyword>
<keyword id="KW-0964">Secreted</keyword>
<keyword id="KW-0732">Signal</keyword>
<accession>Q1HN36</accession>
<sequence>SCMKAAPMKEVGVRGQGSLAYPGLRTQGNLETLSGPNDATRGLTSLADTFEHVIEELLDEQQAIQPSKENKDADLYSTRVMLSSQVPLEPPLLFLLEEYKNYLDAANMSXRVRRHSDPARRGELSVCDSTSEWVTAAEKKTAVDMSGATVTVLEKVPVPKGQLKQYFYETKCSSKGYAKEGCRGIDKRYWNSQCRTTQSFVRALTMDNKKRVGWRFIRIDTSC</sequence>
<evidence type="ECO:0000250" key="1"/>
<evidence type="ECO:0000255" key="2"/>
<evidence type="ECO:0000305" key="3"/>
<name>BDNF_ERYJY</name>
<proteinExistence type="inferred from homology"/>
<comment type="function">
    <text evidence="1">Promotes the survival of neuronal populations that are all located either in the central nervous system or directly connected to it.</text>
</comment>
<comment type="subcellular location">
    <subcellularLocation>
        <location evidence="1">Secreted</location>
    </subcellularLocation>
</comment>
<comment type="similarity">
    <text evidence="3">Belongs to the NGF-beta family.</text>
</comment>
<gene>
    <name type="primary">BDNF</name>
</gene>
<organism>
    <name type="scientific">Eryx jayakari</name>
    <name type="common">Arabian sand boa</name>
    <dbReference type="NCBI Taxonomy" id="380607"/>
    <lineage>
        <taxon>Eukaryota</taxon>
        <taxon>Metazoa</taxon>
        <taxon>Chordata</taxon>
        <taxon>Craniata</taxon>
        <taxon>Vertebrata</taxon>
        <taxon>Euteleostomi</taxon>
        <taxon>Lepidosauria</taxon>
        <taxon>Squamata</taxon>
        <taxon>Bifurcata</taxon>
        <taxon>Unidentata</taxon>
        <taxon>Episquamata</taxon>
        <taxon>Toxicofera</taxon>
        <taxon>Serpentes</taxon>
        <taxon>Henophidia</taxon>
        <taxon>Boidae</taxon>
        <taxon>Erycinae</taxon>
        <taxon>Eryx</taxon>
    </lineage>
</organism>
<reference key="1">
    <citation type="journal article" date="2006" name="Mol. Phylogenet. Evol.">
        <title>Dispersal and vicariance: the complex evolutionary history of boid snakes.</title>
        <authorList>
            <person name="Noonan B.P."/>
            <person name="Chippindale P.T."/>
        </authorList>
    </citation>
    <scope>NUCLEOTIDE SEQUENCE [GENOMIC DNA]</scope>
</reference>
<feature type="signal peptide" evidence="2">
    <location>
        <begin position="1" status="less than"/>
        <end position="5"/>
    </location>
</feature>
<feature type="propeptide" id="PRO_0000346683" evidence="1">
    <location>
        <begin position="6"/>
        <end position="114"/>
    </location>
</feature>
<feature type="chain" id="PRO_0000346684" description="Neurotrophic factor BDNF">
    <location>
        <begin position="115"/>
        <end position="223" status="greater than"/>
    </location>
</feature>
<feature type="glycosylation site" description="N-linked (GlcNAc...) asparagine" evidence="2">
    <location>
        <position position="107"/>
    </location>
</feature>
<feature type="disulfide bond" evidence="1">
    <location>
        <begin position="127"/>
        <end position="194"/>
    </location>
</feature>
<feature type="disulfide bond" evidence="1">
    <location>
        <begin position="172"/>
        <end position="223"/>
    </location>
</feature>
<feature type="non-terminal residue">
    <location>
        <position position="1"/>
    </location>
</feature>
<feature type="non-terminal residue">
    <location>
        <position position="223"/>
    </location>
</feature>
<dbReference type="EMBL" id="DQ465566">
    <property type="protein sequence ID" value="ABF56546.1"/>
    <property type="molecule type" value="Genomic_DNA"/>
</dbReference>
<dbReference type="GlyCosmos" id="Q1HN36">
    <property type="glycosylation" value="1 site, No reported glycans"/>
</dbReference>
<dbReference type="GO" id="GO:0030424">
    <property type="term" value="C:axon"/>
    <property type="evidence" value="ECO:0007669"/>
    <property type="project" value="TreeGrafter"/>
</dbReference>
<dbReference type="GO" id="GO:0030425">
    <property type="term" value="C:dendrite"/>
    <property type="evidence" value="ECO:0007669"/>
    <property type="project" value="TreeGrafter"/>
</dbReference>
<dbReference type="GO" id="GO:0005615">
    <property type="term" value="C:extracellular space"/>
    <property type="evidence" value="ECO:0007669"/>
    <property type="project" value="TreeGrafter"/>
</dbReference>
<dbReference type="GO" id="GO:0008021">
    <property type="term" value="C:synaptic vesicle"/>
    <property type="evidence" value="ECO:0007669"/>
    <property type="project" value="TreeGrafter"/>
</dbReference>
<dbReference type="GO" id="GO:0008083">
    <property type="term" value="F:growth factor activity"/>
    <property type="evidence" value="ECO:0007669"/>
    <property type="project" value="UniProtKB-KW"/>
</dbReference>
<dbReference type="GO" id="GO:0005163">
    <property type="term" value="F:nerve growth factor receptor binding"/>
    <property type="evidence" value="ECO:0007669"/>
    <property type="project" value="TreeGrafter"/>
</dbReference>
<dbReference type="GO" id="GO:0007169">
    <property type="term" value="P:cell surface receptor protein tyrosine kinase signaling pathway"/>
    <property type="evidence" value="ECO:0007669"/>
    <property type="project" value="TreeGrafter"/>
</dbReference>
<dbReference type="GO" id="GO:0050804">
    <property type="term" value="P:modulation of chemical synaptic transmission"/>
    <property type="evidence" value="ECO:0007669"/>
    <property type="project" value="TreeGrafter"/>
</dbReference>
<dbReference type="GO" id="GO:0043524">
    <property type="term" value="P:negative regulation of neuron apoptotic process"/>
    <property type="evidence" value="ECO:0007669"/>
    <property type="project" value="TreeGrafter"/>
</dbReference>
<dbReference type="GO" id="GO:0021675">
    <property type="term" value="P:nerve development"/>
    <property type="evidence" value="ECO:0007669"/>
    <property type="project" value="TreeGrafter"/>
</dbReference>
<dbReference type="GO" id="GO:0038180">
    <property type="term" value="P:nerve growth factor signaling pathway"/>
    <property type="evidence" value="ECO:0007669"/>
    <property type="project" value="TreeGrafter"/>
</dbReference>
<dbReference type="GO" id="GO:0048812">
    <property type="term" value="P:neuron projection morphogenesis"/>
    <property type="evidence" value="ECO:0007669"/>
    <property type="project" value="TreeGrafter"/>
</dbReference>
<dbReference type="FunFam" id="2.10.90.10:FF:000002">
    <property type="entry name" value="Brain-derived neurotrophic factor"/>
    <property type="match status" value="1"/>
</dbReference>
<dbReference type="Gene3D" id="2.10.90.10">
    <property type="entry name" value="Cystine-knot cytokines"/>
    <property type="match status" value="1"/>
</dbReference>
<dbReference type="InterPro" id="IPR020430">
    <property type="entry name" value="Brain-der_neurotrophic_factor"/>
</dbReference>
<dbReference type="InterPro" id="IPR029034">
    <property type="entry name" value="Cystine-knot_cytokine"/>
</dbReference>
<dbReference type="InterPro" id="IPR020408">
    <property type="entry name" value="Nerve_growth_factor-like"/>
</dbReference>
<dbReference type="InterPro" id="IPR002072">
    <property type="entry name" value="Nerve_growth_factor-rel"/>
</dbReference>
<dbReference type="InterPro" id="IPR019846">
    <property type="entry name" value="Nerve_growth_factor_CS"/>
</dbReference>
<dbReference type="PANTHER" id="PTHR11589:SF3">
    <property type="entry name" value="BRAIN-DERIVED NEUROTROPHIC FACTOR"/>
    <property type="match status" value="1"/>
</dbReference>
<dbReference type="PANTHER" id="PTHR11589">
    <property type="entry name" value="NERVE GROWTH FACTOR NGF -RELATED"/>
    <property type="match status" value="1"/>
</dbReference>
<dbReference type="Pfam" id="PF00243">
    <property type="entry name" value="NGF"/>
    <property type="match status" value="1"/>
</dbReference>
<dbReference type="PIRSF" id="PIRSF001789">
    <property type="entry name" value="NGF"/>
    <property type="match status" value="1"/>
</dbReference>
<dbReference type="PRINTS" id="PR01912">
    <property type="entry name" value="BDNFACTOR"/>
</dbReference>
<dbReference type="PRINTS" id="PR00268">
    <property type="entry name" value="NGF"/>
</dbReference>
<dbReference type="SMART" id="SM00140">
    <property type="entry name" value="NGF"/>
    <property type="match status" value="1"/>
</dbReference>
<dbReference type="SUPFAM" id="SSF57501">
    <property type="entry name" value="Cystine-knot cytokines"/>
    <property type="match status" value="1"/>
</dbReference>
<dbReference type="PROSITE" id="PS00248">
    <property type="entry name" value="NGF_1"/>
    <property type="match status" value="1"/>
</dbReference>
<dbReference type="PROSITE" id="PS50270">
    <property type="entry name" value="NGF_2"/>
    <property type="match status" value="1"/>
</dbReference>
<protein>
    <recommendedName>
        <fullName evidence="3">Neurotrophic factor BDNF precursor form</fullName>
        <shortName>proBDNF</shortName>
    </recommendedName>
    <alternativeName>
        <fullName>Brain-derived neurotrophic factor</fullName>
    </alternativeName>
    <component>
        <recommendedName>
            <fullName>Neurotrophic factor BDNF</fullName>
        </recommendedName>
    </component>
</protein>